<proteinExistence type="inferred from homology"/>
<name>BPT_ACIET</name>
<accession>B9MJA6</accession>
<sequence>MTQLNDLPLQSLQFYATAPYPCSYLPERQARSQVATPSHLIQNDVYSGLVARGFRRSGMFTYRPYCDGCQACTPLRVVVDPFKPDRSQRRAWKRHAGLQARVLRLCYLPEHYQLYLRYQNARHAGGGMDQDSIDQYTQFLLQSRVNSRLVEFRETGADGQPGTLKMVSILDVLEDGLSAVYTFYEPEPGASYGTYNVLWQVQQARTLGLPYVYLGYWIEQSPKMNYKARFMPHELRIDGRWQRSKS</sequence>
<dbReference type="EC" id="2.3.2.29" evidence="1"/>
<dbReference type="EMBL" id="CP001392">
    <property type="protein sequence ID" value="ACM33244.1"/>
    <property type="molecule type" value="Genomic_DNA"/>
</dbReference>
<dbReference type="RefSeq" id="WP_011805231.1">
    <property type="nucleotide sequence ID" value="NC_011992.1"/>
</dbReference>
<dbReference type="SMR" id="B9MJA6"/>
<dbReference type="KEGG" id="dia:Dtpsy_1787"/>
<dbReference type="eggNOG" id="COG2935">
    <property type="taxonomic scope" value="Bacteria"/>
</dbReference>
<dbReference type="HOGENOM" id="CLU_077607_0_0_4"/>
<dbReference type="Proteomes" id="UP000000450">
    <property type="component" value="Chromosome"/>
</dbReference>
<dbReference type="GO" id="GO:0005737">
    <property type="term" value="C:cytoplasm"/>
    <property type="evidence" value="ECO:0007669"/>
    <property type="project" value="UniProtKB-SubCell"/>
</dbReference>
<dbReference type="GO" id="GO:0004057">
    <property type="term" value="F:arginyl-tRNA--protein transferase activity"/>
    <property type="evidence" value="ECO:0007669"/>
    <property type="project" value="InterPro"/>
</dbReference>
<dbReference type="GO" id="GO:0008914">
    <property type="term" value="F:leucyl-tRNA--protein transferase activity"/>
    <property type="evidence" value="ECO:0007669"/>
    <property type="project" value="UniProtKB-UniRule"/>
</dbReference>
<dbReference type="GO" id="GO:0071596">
    <property type="term" value="P:ubiquitin-dependent protein catabolic process via the N-end rule pathway"/>
    <property type="evidence" value="ECO:0007669"/>
    <property type="project" value="InterPro"/>
</dbReference>
<dbReference type="HAMAP" id="MF_00689">
    <property type="entry name" value="Bpt"/>
    <property type="match status" value="1"/>
</dbReference>
<dbReference type="InterPro" id="IPR016181">
    <property type="entry name" value="Acyl_CoA_acyltransferase"/>
</dbReference>
<dbReference type="InterPro" id="IPR017138">
    <property type="entry name" value="Asp_Glu_LeuTrfase"/>
</dbReference>
<dbReference type="InterPro" id="IPR030700">
    <property type="entry name" value="N-end_Aminoacyl_Trfase"/>
</dbReference>
<dbReference type="InterPro" id="IPR007472">
    <property type="entry name" value="N-end_Aminoacyl_Trfase_C"/>
</dbReference>
<dbReference type="InterPro" id="IPR007471">
    <property type="entry name" value="N-end_Aminoacyl_Trfase_N"/>
</dbReference>
<dbReference type="NCBIfam" id="NF002341">
    <property type="entry name" value="PRK01305.1-1"/>
    <property type="match status" value="1"/>
</dbReference>
<dbReference type="NCBIfam" id="NF002342">
    <property type="entry name" value="PRK01305.1-3"/>
    <property type="match status" value="1"/>
</dbReference>
<dbReference type="NCBIfam" id="NF002346">
    <property type="entry name" value="PRK01305.2-3"/>
    <property type="match status" value="1"/>
</dbReference>
<dbReference type="PANTHER" id="PTHR21367">
    <property type="entry name" value="ARGININE-TRNA-PROTEIN TRANSFERASE 1"/>
    <property type="match status" value="1"/>
</dbReference>
<dbReference type="PANTHER" id="PTHR21367:SF1">
    <property type="entry name" value="ARGINYL-TRNA--PROTEIN TRANSFERASE 1"/>
    <property type="match status" value="1"/>
</dbReference>
<dbReference type="Pfam" id="PF04377">
    <property type="entry name" value="ATE_C"/>
    <property type="match status" value="1"/>
</dbReference>
<dbReference type="Pfam" id="PF04376">
    <property type="entry name" value="ATE_N"/>
    <property type="match status" value="1"/>
</dbReference>
<dbReference type="PIRSF" id="PIRSF037208">
    <property type="entry name" value="ATE_pro_prd"/>
    <property type="match status" value="1"/>
</dbReference>
<dbReference type="SUPFAM" id="SSF55729">
    <property type="entry name" value="Acyl-CoA N-acyltransferases (Nat)"/>
    <property type="match status" value="1"/>
</dbReference>
<feature type="chain" id="PRO_1000147804" description="Aspartate/glutamate leucyltransferase">
    <location>
        <begin position="1"/>
        <end position="246"/>
    </location>
</feature>
<evidence type="ECO:0000255" key="1">
    <source>
        <dbReference type="HAMAP-Rule" id="MF_00689"/>
    </source>
</evidence>
<comment type="function">
    <text evidence="1">Functions in the N-end rule pathway of protein degradation where it conjugates Leu from its aminoacyl-tRNA to the N-termini of proteins containing an N-terminal aspartate or glutamate.</text>
</comment>
<comment type="catalytic activity">
    <reaction evidence="1">
        <text>N-terminal L-glutamyl-[protein] + L-leucyl-tRNA(Leu) = N-terminal L-leucyl-L-glutamyl-[protein] + tRNA(Leu) + H(+)</text>
        <dbReference type="Rhea" id="RHEA:50412"/>
        <dbReference type="Rhea" id="RHEA-COMP:9613"/>
        <dbReference type="Rhea" id="RHEA-COMP:9622"/>
        <dbReference type="Rhea" id="RHEA-COMP:12664"/>
        <dbReference type="Rhea" id="RHEA-COMP:12668"/>
        <dbReference type="ChEBI" id="CHEBI:15378"/>
        <dbReference type="ChEBI" id="CHEBI:64721"/>
        <dbReference type="ChEBI" id="CHEBI:78442"/>
        <dbReference type="ChEBI" id="CHEBI:78494"/>
        <dbReference type="ChEBI" id="CHEBI:133041"/>
        <dbReference type="EC" id="2.3.2.29"/>
    </reaction>
</comment>
<comment type="catalytic activity">
    <reaction evidence="1">
        <text>N-terminal L-aspartyl-[protein] + L-leucyl-tRNA(Leu) = N-terminal L-leucyl-L-aspartyl-[protein] + tRNA(Leu) + H(+)</text>
        <dbReference type="Rhea" id="RHEA:50420"/>
        <dbReference type="Rhea" id="RHEA-COMP:9613"/>
        <dbReference type="Rhea" id="RHEA-COMP:9622"/>
        <dbReference type="Rhea" id="RHEA-COMP:12669"/>
        <dbReference type="Rhea" id="RHEA-COMP:12674"/>
        <dbReference type="ChEBI" id="CHEBI:15378"/>
        <dbReference type="ChEBI" id="CHEBI:64720"/>
        <dbReference type="ChEBI" id="CHEBI:78442"/>
        <dbReference type="ChEBI" id="CHEBI:78494"/>
        <dbReference type="ChEBI" id="CHEBI:133042"/>
        <dbReference type="EC" id="2.3.2.29"/>
    </reaction>
</comment>
<comment type="subcellular location">
    <subcellularLocation>
        <location evidence="1">Cytoplasm</location>
    </subcellularLocation>
</comment>
<comment type="similarity">
    <text evidence="1">Belongs to the R-transferase family. Bpt subfamily.</text>
</comment>
<protein>
    <recommendedName>
        <fullName evidence="1">Aspartate/glutamate leucyltransferase</fullName>
        <ecNumber evidence="1">2.3.2.29</ecNumber>
    </recommendedName>
</protein>
<reference key="1">
    <citation type="submission" date="2009-01" db="EMBL/GenBank/DDBJ databases">
        <title>Complete sequence of Diaphorobacter sp. TPSY.</title>
        <authorList>
            <consortium name="US DOE Joint Genome Institute"/>
            <person name="Lucas S."/>
            <person name="Copeland A."/>
            <person name="Lapidus A."/>
            <person name="Glavina del Rio T."/>
            <person name="Tice H."/>
            <person name="Bruce D."/>
            <person name="Goodwin L."/>
            <person name="Pitluck S."/>
            <person name="Chertkov O."/>
            <person name="Brettin T."/>
            <person name="Detter J.C."/>
            <person name="Han C."/>
            <person name="Larimer F."/>
            <person name="Land M."/>
            <person name="Hauser L."/>
            <person name="Kyrpides N."/>
            <person name="Mikhailova N."/>
            <person name="Coates J.D."/>
        </authorList>
    </citation>
    <scope>NUCLEOTIDE SEQUENCE [LARGE SCALE GENOMIC DNA]</scope>
    <source>
        <strain>TPSY</strain>
    </source>
</reference>
<organism>
    <name type="scientific">Acidovorax ebreus (strain TPSY)</name>
    <name type="common">Diaphorobacter sp. (strain TPSY)</name>
    <dbReference type="NCBI Taxonomy" id="535289"/>
    <lineage>
        <taxon>Bacteria</taxon>
        <taxon>Pseudomonadati</taxon>
        <taxon>Pseudomonadota</taxon>
        <taxon>Betaproteobacteria</taxon>
        <taxon>Burkholderiales</taxon>
        <taxon>Comamonadaceae</taxon>
        <taxon>Diaphorobacter</taxon>
    </lineage>
</organism>
<gene>
    <name evidence="1" type="primary">bpt</name>
    <name type="ordered locus">Dtpsy_1787</name>
</gene>
<keyword id="KW-0012">Acyltransferase</keyword>
<keyword id="KW-0963">Cytoplasm</keyword>
<keyword id="KW-1185">Reference proteome</keyword>
<keyword id="KW-0808">Transferase</keyword>